<sequence length="285" mass="33297">MHIIKTIKVLYREIKILKKSNKKIGLVPTMGNLHDGHIKLILLAKKYSDIIIVSIFINPMQFDNLSDLKNYPKTFMKDSIILKKYHVDILFFPHINEIYPNGIEHQTFVEVIKLSKILEGQSRPGHFRGVTTIITKLFNFIQPDFAFFGEKDYQQLLIIKILVKELNYMIKIISLPTIRLKNGLALSSRNNYLSSQENEIAPYLYKIIKKTCEKIIKEDDNIRPKIIHESKILLIKKGFSVDIFDIYDYKNLEHPSKKVKKVILLASVWLGNTRLIDNKKIILNY</sequence>
<gene>
    <name evidence="1" type="primary">panC</name>
    <name type="ordered locus">BUAPTUC7_195</name>
</gene>
<feature type="chain" id="PRO_1000123404" description="Pantothenate synthetase">
    <location>
        <begin position="1"/>
        <end position="285"/>
    </location>
</feature>
<feature type="active site" description="Proton donor" evidence="1">
    <location>
        <position position="37"/>
    </location>
</feature>
<feature type="binding site" evidence="1">
    <location>
        <begin position="30"/>
        <end position="37"/>
    </location>
    <ligand>
        <name>ATP</name>
        <dbReference type="ChEBI" id="CHEBI:30616"/>
    </ligand>
</feature>
<feature type="binding site" evidence="1">
    <location>
        <position position="61"/>
    </location>
    <ligand>
        <name>(R)-pantoate</name>
        <dbReference type="ChEBI" id="CHEBI:15980"/>
    </ligand>
</feature>
<feature type="binding site" evidence="1">
    <location>
        <position position="61"/>
    </location>
    <ligand>
        <name>beta-alanine</name>
        <dbReference type="ChEBI" id="CHEBI:57966"/>
    </ligand>
</feature>
<feature type="binding site" evidence="1">
    <location>
        <begin position="149"/>
        <end position="152"/>
    </location>
    <ligand>
        <name>ATP</name>
        <dbReference type="ChEBI" id="CHEBI:30616"/>
    </ligand>
</feature>
<feature type="binding site" evidence="1">
    <location>
        <position position="155"/>
    </location>
    <ligand>
        <name>(R)-pantoate</name>
        <dbReference type="ChEBI" id="CHEBI:15980"/>
    </ligand>
</feature>
<feature type="binding site" evidence="1">
    <location>
        <position position="178"/>
    </location>
    <ligand>
        <name>ATP</name>
        <dbReference type="ChEBI" id="CHEBI:30616"/>
    </ligand>
</feature>
<feature type="binding site" evidence="1">
    <location>
        <begin position="186"/>
        <end position="189"/>
    </location>
    <ligand>
        <name>ATP</name>
        <dbReference type="ChEBI" id="CHEBI:30616"/>
    </ligand>
</feature>
<reference key="1">
    <citation type="journal article" date="2009" name="Science">
        <title>The dynamics and time scale of ongoing genomic erosion in symbiotic bacteria.</title>
        <authorList>
            <person name="Moran N.A."/>
            <person name="McLaughlin H.J."/>
            <person name="Sorek R."/>
        </authorList>
    </citation>
    <scope>NUCLEOTIDE SEQUENCE [LARGE SCALE GENOMIC DNA]</scope>
    <source>
        <strain>Tuc7</strain>
    </source>
</reference>
<accession>B8D7A0</accession>
<comment type="function">
    <text evidence="1">Catalyzes the condensation of pantoate with beta-alanine in an ATP-dependent reaction via a pantoyl-adenylate intermediate.</text>
</comment>
<comment type="catalytic activity">
    <reaction evidence="1">
        <text>(R)-pantoate + beta-alanine + ATP = (R)-pantothenate + AMP + diphosphate + H(+)</text>
        <dbReference type="Rhea" id="RHEA:10912"/>
        <dbReference type="ChEBI" id="CHEBI:15378"/>
        <dbReference type="ChEBI" id="CHEBI:15980"/>
        <dbReference type="ChEBI" id="CHEBI:29032"/>
        <dbReference type="ChEBI" id="CHEBI:30616"/>
        <dbReference type="ChEBI" id="CHEBI:33019"/>
        <dbReference type="ChEBI" id="CHEBI:57966"/>
        <dbReference type="ChEBI" id="CHEBI:456215"/>
        <dbReference type="EC" id="6.3.2.1"/>
    </reaction>
</comment>
<comment type="pathway">
    <text evidence="1">Cofactor biosynthesis; (R)-pantothenate biosynthesis; (R)-pantothenate from (R)-pantoate and beta-alanine: step 1/1.</text>
</comment>
<comment type="subunit">
    <text evidence="1">Homodimer.</text>
</comment>
<comment type="subcellular location">
    <subcellularLocation>
        <location evidence="1">Cytoplasm</location>
    </subcellularLocation>
</comment>
<comment type="miscellaneous">
    <text evidence="1">The reaction proceeds by a bi uni uni bi ping pong mechanism.</text>
</comment>
<comment type="similarity">
    <text evidence="1">Belongs to the pantothenate synthetase family.</text>
</comment>
<keyword id="KW-0067">ATP-binding</keyword>
<keyword id="KW-0963">Cytoplasm</keyword>
<keyword id="KW-0436">Ligase</keyword>
<keyword id="KW-0547">Nucleotide-binding</keyword>
<keyword id="KW-0566">Pantothenate biosynthesis</keyword>
<protein>
    <recommendedName>
        <fullName evidence="1">Pantothenate synthetase</fullName>
        <shortName evidence="1">PS</shortName>
        <ecNumber evidence="1">6.3.2.1</ecNumber>
    </recommendedName>
    <alternativeName>
        <fullName evidence="1">Pantoate--beta-alanine ligase</fullName>
    </alternativeName>
    <alternativeName>
        <fullName evidence="1">Pantoate-activating enzyme</fullName>
    </alternativeName>
</protein>
<organism>
    <name type="scientific">Buchnera aphidicola subsp. Acyrthosiphon pisum (strain Tuc7)</name>
    <dbReference type="NCBI Taxonomy" id="561501"/>
    <lineage>
        <taxon>Bacteria</taxon>
        <taxon>Pseudomonadati</taxon>
        <taxon>Pseudomonadota</taxon>
        <taxon>Gammaproteobacteria</taxon>
        <taxon>Enterobacterales</taxon>
        <taxon>Erwiniaceae</taxon>
        <taxon>Buchnera</taxon>
    </lineage>
</organism>
<dbReference type="EC" id="6.3.2.1" evidence="1"/>
<dbReference type="EMBL" id="CP001158">
    <property type="protein sequence ID" value="ACL30015.1"/>
    <property type="molecule type" value="Genomic_DNA"/>
</dbReference>
<dbReference type="RefSeq" id="WP_012619468.1">
    <property type="nucleotide sequence ID" value="NC_011834.1"/>
</dbReference>
<dbReference type="SMR" id="B8D7A0"/>
<dbReference type="KEGG" id="bau:BUAPTUC7_195"/>
<dbReference type="HOGENOM" id="CLU_047148_0_0_6"/>
<dbReference type="UniPathway" id="UPA00028">
    <property type="reaction ID" value="UER00005"/>
</dbReference>
<dbReference type="GO" id="GO:0005829">
    <property type="term" value="C:cytosol"/>
    <property type="evidence" value="ECO:0007669"/>
    <property type="project" value="TreeGrafter"/>
</dbReference>
<dbReference type="GO" id="GO:0005524">
    <property type="term" value="F:ATP binding"/>
    <property type="evidence" value="ECO:0007669"/>
    <property type="project" value="UniProtKB-KW"/>
</dbReference>
<dbReference type="GO" id="GO:0004592">
    <property type="term" value="F:pantoate-beta-alanine ligase activity"/>
    <property type="evidence" value="ECO:0007669"/>
    <property type="project" value="UniProtKB-UniRule"/>
</dbReference>
<dbReference type="GO" id="GO:0015940">
    <property type="term" value="P:pantothenate biosynthetic process"/>
    <property type="evidence" value="ECO:0007669"/>
    <property type="project" value="UniProtKB-UniRule"/>
</dbReference>
<dbReference type="CDD" id="cd00560">
    <property type="entry name" value="PanC"/>
    <property type="match status" value="1"/>
</dbReference>
<dbReference type="FunFam" id="3.40.50.620:FF:000013">
    <property type="entry name" value="Pantothenate synthetase"/>
    <property type="match status" value="1"/>
</dbReference>
<dbReference type="Gene3D" id="3.40.50.620">
    <property type="entry name" value="HUPs"/>
    <property type="match status" value="1"/>
</dbReference>
<dbReference type="Gene3D" id="3.30.1300.10">
    <property type="entry name" value="Pantoate-beta-alanine ligase, C-terminal domain"/>
    <property type="match status" value="1"/>
</dbReference>
<dbReference type="HAMAP" id="MF_00158">
    <property type="entry name" value="PanC"/>
    <property type="match status" value="1"/>
</dbReference>
<dbReference type="InterPro" id="IPR003721">
    <property type="entry name" value="Pantoate_ligase"/>
</dbReference>
<dbReference type="InterPro" id="IPR042176">
    <property type="entry name" value="Pantoate_ligase_C"/>
</dbReference>
<dbReference type="InterPro" id="IPR014729">
    <property type="entry name" value="Rossmann-like_a/b/a_fold"/>
</dbReference>
<dbReference type="NCBIfam" id="TIGR00018">
    <property type="entry name" value="panC"/>
    <property type="match status" value="1"/>
</dbReference>
<dbReference type="PANTHER" id="PTHR21299">
    <property type="entry name" value="CYTIDYLATE KINASE/PANTOATE-BETA-ALANINE LIGASE"/>
    <property type="match status" value="1"/>
</dbReference>
<dbReference type="PANTHER" id="PTHR21299:SF1">
    <property type="entry name" value="PANTOATE--BETA-ALANINE LIGASE"/>
    <property type="match status" value="1"/>
</dbReference>
<dbReference type="Pfam" id="PF02569">
    <property type="entry name" value="Pantoate_ligase"/>
    <property type="match status" value="1"/>
</dbReference>
<dbReference type="SUPFAM" id="SSF52374">
    <property type="entry name" value="Nucleotidylyl transferase"/>
    <property type="match status" value="1"/>
</dbReference>
<evidence type="ECO:0000255" key="1">
    <source>
        <dbReference type="HAMAP-Rule" id="MF_00158"/>
    </source>
</evidence>
<proteinExistence type="inferred from homology"/>
<name>PANC_BUCAT</name>